<comment type="function">
    <text evidence="1">Catalyzes the interconversion of methylthioribose-1-phosphate (MTR-1-P) into methylthioribulose-1-phosphate (MTRu-1-P).</text>
</comment>
<comment type="catalytic activity">
    <reaction evidence="1">
        <text>5-(methylsulfanyl)-alpha-D-ribose 1-phosphate = 5-(methylsulfanyl)-D-ribulose 1-phosphate</text>
        <dbReference type="Rhea" id="RHEA:19989"/>
        <dbReference type="ChEBI" id="CHEBI:58533"/>
        <dbReference type="ChEBI" id="CHEBI:58548"/>
        <dbReference type="EC" id="5.3.1.23"/>
    </reaction>
</comment>
<comment type="pathway">
    <text evidence="1">Amino-acid biosynthesis; L-methionine biosynthesis via salvage pathway; L-methionine from S-methyl-5-thio-alpha-D-ribose 1-phosphate: step 1/6.</text>
</comment>
<comment type="similarity">
    <text evidence="2">Belongs to the eIF-2B alpha/beta/delta subunits family. MtnA subfamily.</text>
</comment>
<sequence>MDRVLPFRFAEEEGVFWLLDQRRLPQEEVYVPVRTAREMAQAIRDMVVRGAPAIGVSAAFGMVLAHLAGEDLEEADRRLRASRPTAVNLFHALDRMRPFWGDLAGSLLEARRIWREVEETEAAISRHGAQILWGQVLTHCNTGPLATGGYGTALGAIVEAYRLGRVRHVWVDETRPYLQGARLTAYELQKAGVPATLITDSMAGWLMARGAVDAVVVGVDRMALNGDFANKVGTYALAVLAHHHGIPFYAALPLSSVDPRLASGEGIPIEERSPEEVVAFRGVRIAPEGFPAYHPAFDVTPHRYLTGIITEKGVLYPPFAEGLRRALGLD</sequence>
<dbReference type="EC" id="5.3.1.23" evidence="1"/>
<dbReference type="EMBL" id="AE017221">
    <property type="protein sequence ID" value="AAS81055.1"/>
    <property type="molecule type" value="Genomic_DNA"/>
</dbReference>
<dbReference type="RefSeq" id="WP_011173148.1">
    <property type="nucleotide sequence ID" value="NC_005835.1"/>
</dbReference>
<dbReference type="SMR" id="Q72JR1"/>
<dbReference type="KEGG" id="tth:TT_C0707"/>
<dbReference type="eggNOG" id="COG0182">
    <property type="taxonomic scope" value="Bacteria"/>
</dbReference>
<dbReference type="HOGENOM" id="CLU_016218_1_2_0"/>
<dbReference type="OrthoDB" id="9803436at2"/>
<dbReference type="UniPathway" id="UPA00904">
    <property type="reaction ID" value="UER00874"/>
</dbReference>
<dbReference type="Proteomes" id="UP000000592">
    <property type="component" value="Chromosome"/>
</dbReference>
<dbReference type="GO" id="GO:0046523">
    <property type="term" value="F:S-methyl-5-thioribose-1-phosphate isomerase activity"/>
    <property type="evidence" value="ECO:0007669"/>
    <property type="project" value="UniProtKB-UniRule"/>
</dbReference>
<dbReference type="GO" id="GO:0019509">
    <property type="term" value="P:L-methionine salvage from methylthioadenosine"/>
    <property type="evidence" value="ECO:0007669"/>
    <property type="project" value="UniProtKB-UniRule"/>
</dbReference>
<dbReference type="FunFam" id="3.40.50.10470:FF:000006">
    <property type="entry name" value="Methylthioribose-1-phosphate isomerase"/>
    <property type="match status" value="1"/>
</dbReference>
<dbReference type="Gene3D" id="1.20.120.420">
    <property type="entry name" value="translation initiation factor eif-2b, domain 1"/>
    <property type="match status" value="1"/>
</dbReference>
<dbReference type="Gene3D" id="3.40.50.10470">
    <property type="entry name" value="Translation initiation factor eif-2b, domain 2"/>
    <property type="match status" value="1"/>
</dbReference>
<dbReference type="HAMAP" id="MF_01678">
    <property type="entry name" value="Salvage_MtnA"/>
    <property type="match status" value="1"/>
</dbReference>
<dbReference type="InterPro" id="IPR000649">
    <property type="entry name" value="IF-2B-related"/>
</dbReference>
<dbReference type="InterPro" id="IPR005251">
    <property type="entry name" value="IF-M1Pi"/>
</dbReference>
<dbReference type="InterPro" id="IPR042529">
    <property type="entry name" value="IF_2B-like_C"/>
</dbReference>
<dbReference type="InterPro" id="IPR011559">
    <property type="entry name" value="Initiation_fac_2B_a/b/d"/>
</dbReference>
<dbReference type="InterPro" id="IPR027363">
    <property type="entry name" value="M1Pi_N"/>
</dbReference>
<dbReference type="InterPro" id="IPR037171">
    <property type="entry name" value="NagB/RpiA_transferase-like"/>
</dbReference>
<dbReference type="NCBIfam" id="TIGR00524">
    <property type="entry name" value="eIF-2B_rel"/>
    <property type="match status" value="1"/>
</dbReference>
<dbReference type="NCBIfam" id="NF004326">
    <property type="entry name" value="PRK05720.1"/>
    <property type="match status" value="1"/>
</dbReference>
<dbReference type="NCBIfam" id="TIGR00512">
    <property type="entry name" value="salvage_mtnA"/>
    <property type="match status" value="1"/>
</dbReference>
<dbReference type="PANTHER" id="PTHR43475">
    <property type="entry name" value="METHYLTHIORIBOSE-1-PHOSPHATE ISOMERASE"/>
    <property type="match status" value="1"/>
</dbReference>
<dbReference type="PANTHER" id="PTHR43475:SF1">
    <property type="entry name" value="METHYLTHIORIBOSE-1-PHOSPHATE ISOMERASE"/>
    <property type="match status" value="1"/>
</dbReference>
<dbReference type="Pfam" id="PF01008">
    <property type="entry name" value="IF-2B"/>
    <property type="match status" value="1"/>
</dbReference>
<dbReference type="SUPFAM" id="SSF100950">
    <property type="entry name" value="NagB/RpiA/CoA transferase-like"/>
    <property type="match status" value="1"/>
</dbReference>
<keyword id="KW-0028">Amino-acid biosynthesis</keyword>
<keyword id="KW-0413">Isomerase</keyword>
<keyword id="KW-0486">Methionine biosynthesis</keyword>
<reference key="1">
    <citation type="journal article" date="2004" name="Nat. Biotechnol.">
        <title>The genome sequence of the extreme thermophile Thermus thermophilus.</title>
        <authorList>
            <person name="Henne A."/>
            <person name="Brueggemann H."/>
            <person name="Raasch C."/>
            <person name="Wiezer A."/>
            <person name="Hartsch T."/>
            <person name="Liesegang H."/>
            <person name="Johann A."/>
            <person name="Lienard T."/>
            <person name="Gohl O."/>
            <person name="Martinez-Arias R."/>
            <person name="Jacobi C."/>
            <person name="Starkuviene V."/>
            <person name="Schlenczeck S."/>
            <person name="Dencker S."/>
            <person name="Huber R."/>
            <person name="Klenk H.-P."/>
            <person name="Kramer W."/>
            <person name="Merkl R."/>
            <person name="Gottschalk G."/>
            <person name="Fritz H.-J."/>
        </authorList>
    </citation>
    <scope>NUCLEOTIDE SEQUENCE [LARGE SCALE GENOMIC DNA]</scope>
    <source>
        <strain>ATCC BAA-163 / DSM 7039 / HB27</strain>
    </source>
</reference>
<name>MTNA_THET2</name>
<evidence type="ECO:0000255" key="1">
    <source>
        <dbReference type="HAMAP-Rule" id="MF_01678"/>
    </source>
</evidence>
<evidence type="ECO:0000305" key="2"/>
<protein>
    <recommendedName>
        <fullName evidence="1">Methylthioribose-1-phosphate isomerase</fullName>
        <shortName evidence="1">M1Pi</shortName>
        <shortName evidence="1">MTR-1-P isomerase</shortName>
        <ecNumber evidence="1">5.3.1.23</ecNumber>
    </recommendedName>
    <alternativeName>
        <fullName evidence="1">S-methyl-5-thioribose-1-phosphate isomerase</fullName>
    </alternativeName>
</protein>
<feature type="chain" id="PRO_0000357264" description="Methylthioribose-1-phosphate isomerase">
    <location>
        <begin position="1"/>
        <end position="330"/>
    </location>
</feature>
<feature type="active site" description="Proton donor" evidence="1">
    <location>
        <position position="220"/>
    </location>
</feature>
<feature type="binding site" evidence="1">
    <location>
        <begin position="49"/>
        <end position="51"/>
    </location>
    <ligand>
        <name>substrate</name>
    </ligand>
</feature>
<feature type="binding site" evidence="1">
    <location>
        <position position="83"/>
    </location>
    <ligand>
        <name>substrate</name>
    </ligand>
</feature>
<feature type="binding site" evidence="1">
    <location>
        <position position="179"/>
    </location>
    <ligand>
        <name>substrate</name>
    </ligand>
</feature>
<feature type="binding site" evidence="1">
    <location>
        <begin position="230"/>
        <end position="231"/>
    </location>
    <ligand>
        <name>substrate</name>
    </ligand>
</feature>
<feature type="site" description="Transition state stabilizer" evidence="1">
    <location>
        <position position="140"/>
    </location>
</feature>
<accession>Q72JR1</accession>
<gene>
    <name evidence="1" type="primary">mtnA</name>
    <name type="ordered locus">TT_C0707</name>
</gene>
<organism>
    <name type="scientific">Thermus thermophilus (strain ATCC BAA-163 / DSM 7039 / HB27)</name>
    <dbReference type="NCBI Taxonomy" id="262724"/>
    <lineage>
        <taxon>Bacteria</taxon>
        <taxon>Thermotogati</taxon>
        <taxon>Deinococcota</taxon>
        <taxon>Deinococci</taxon>
        <taxon>Thermales</taxon>
        <taxon>Thermaceae</taxon>
        <taxon>Thermus</taxon>
    </lineage>
</organism>
<proteinExistence type="inferred from homology"/>